<reference key="1">
    <citation type="journal article" date="1981" name="J. Mol. Biol.">
        <title>Nucleotide sequence of the kanamycin resistance transposon Tn903.</title>
        <authorList>
            <person name="Oka A."/>
            <person name="Sugisaki H."/>
            <person name="Takanami M."/>
        </authorList>
    </citation>
    <scope>NUCLEOTIDE SEQUENCE [GENOMIC DNA]</scope>
</reference>
<reference key="2">
    <citation type="journal article" date="1980" name="Proc. Natl. Acad. Sci. U.S.A.">
        <title>Genetic and DNA sequence analysis of the kanamycin resistance transposon Tn903.</title>
        <authorList>
            <person name="Grindley N.D.F."/>
            <person name="Joyce C.M."/>
        </authorList>
    </citation>
    <scope>NUCLEOTIDE SEQUENCE [GENOMIC DNA]</scope>
</reference>
<reference key="3">
    <citation type="journal article" date="1981" name="Cold Spring Harb. Symp. Quant. Biol.">
        <title>Analysis of the structure and function of the kanamycin-resistance transposon Tn903.</title>
        <authorList>
            <person name="Grindley N.D.F."/>
            <person name="Joyce C.M."/>
        </authorList>
    </citation>
    <scope>NUCLEOTIDE SEQUENCE [GENOMIC DNA]</scope>
</reference>
<feature type="chain" id="PRO_0000065593" description="Probable transposase for transposon Tn903">
    <location>
        <begin position="1"/>
        <end position="307"/>
    </location>
</feature>
<comment type="function">
    <text>Required for transposition of transposon Tn903.</text>
</comment>
<comment type="miscellaneous">
    <text>Transposon Tn903 codes for kanamycin resistance.</text>
</comment>
<name>TRA2_ECOLX</name>
<proteinExistence type="predicted"/>
<organism>
    <name type="scientific">Escherichia coli</name>
    <dbReference type="NCBI Taxonomy" id="562"/>
    <lineage>
        <taxon>Bacteria</taxon>
        <taxon>Pseudomonadati</taxon>
        <taxon>Pseudomonadota</taxon>
        <taxon>Gammaproteobacteria</taxon>
        <taxon>Enterobacterales</taxon>
        <taxon>Enterobacteriaceae</taxon>
        <taxon>Escherichia</taxon>
    </lineage>
</organism>
<protein>
    <recommendedName>
        <fullName>Probable transposase for transposon Tn903</fullName>
    </recommendedName>
</protein>
<sequence>MAKQKFKITNWSTYNKALINRGSLTFWLDDGAIQAWYESATPSSRGRPQRYSDLAITTVLVIKRVFRLTLRAAQGFIDSIFTLMNVPLRCPDYSCVSRRAKSVNISFKTFTRGEIAHLVIDSTGLKVFGEGEWKVKKHGQERRRIWRKLHLAVDSKTHEIICADLSLNNVTDSEAFPGLIRQTHRKIRAASADGAYDTRLCHDELRRKKISALIPPRKGAGYWPGEYADRNRAVANQRMTGSNARWKWTTDYNRRSIAETAMYRVKQLFGGSLTLRDYDGQVAEAMALVRALNKMTKAGMPESVRIA</sequence>
<keyword id="KW-0233">DNA recombination</keyword>
<keyword id="KW-0238">DNA-binding</keyword>
<keyword id="KW-0814">Transposable element</keyword>
<keyword id="KW-0815">Transposition</keyword>
<dbReference type="EMBL" id="V00621">
    <property type="protein sequence ID" value="CAA23897.1"/>
    <property type="molecule type" value="Genomic_DNA"/>
</dbReference>
<dbReference type="EMBL" id="V00359">
    <property type="protein sequence ID" value="CAA23657.1"/>
    <property type="molecule type" value="Genomic_DNA"/>
</dbReference>
<dbReference type="EMBL" id="AH000949">
    <property type="protein sequence ID" value="AAA27447.1"/>
    <property type="molecule type" value="Genomic_DNA"/>
</dbReference>
<dbReference type="PIR" id="A92864">
    <property type="entry name" value="TQEC93"/>
</dbReference>
<dbReference type="RefSeq" id="WP_032416385.1">
    <property type="nucleotide sequence ID" value="NZ_FZIM01000041.1"/>
</dbReference>
<dbReference type="GO" id="GO:0003677">
    <property type="term" value="F:DNA binding"/>
    <property type="evidence" value="ECO:0007669"/>
    <property type="project" value="UniProtKB-KW"/>
</dbReference>
<dbReference type="GO" id="GO:0006310">
    <property type="term" value="P:DNA recombination"/>
    <property type="evidence" value="ECO:0007669"/>
    <property type="project" value="UniProtKB-KW"/>
</dbReference>
<dbReference type="GO" id="GO:0032196">
    <property type="term" value="P:transposition"/>
    <property type="evidence" value="ECO:0007669"/>
    <property type="project" value="UniProtKB-KW"/>
</dbReference>
<dbReference type="InterPro" id="IPR053172">
    <property type="entry name" value="Tn903_transposase"/>
</dbReference>
<dbReference type="InterPro" id="IPR025668">
    <property type="entry name" value="Tnp_DDE_dom"/>
</dbReference>
<dbReference type="InterPro" id="IPR053520">
    <property type="entry name" value="Transposase_Tn903"/>
</dbReference>
<dbReference type="NCBIfam" id="NF033579">
    <property type="entry name" value="transpos_IS5_2"/>
    <property type="match status" value="1"/>
</dbReference>
<dbReference type="PANTHER" id="PTHR34631">
    <property type="match status" value="1"/>
</dbReference>
<dbReference type="PANTHER" id="PTHR34631:SF3">
    <property type="entry name" value="ISSOD12 TRANSPOSASE TNPA_ISSOD12"/>
    <property type="match status" value="1"/>
</dbReference>
<dbReference type="Pfam" id="PF13737">
    <property type="entry name" value="DDE_Tnp_1_5"/>
    <property type="match status" value="1"/>
</dbReference>
<accession>P03009</accession>